<name>SYR_ACIF2</name>
<keyword id="KW-0030">Aminoacyl-tRNA synthetase</keyword>
<keyword id="KW-0067">ATP-binding</keyword>
<keyword id="KW-0963">Cytoplasm</keyword>
<keyword id="KW-0436">Ligase</keyword>
<keyword id="KW-0547">Nucleotide-binding</keyword>
<keyword id="KW-0648">Protein biosynthesis</keyword>
<keyword id="KW-1185">Reference proteome</keyword>
<reference key="1">
    <citation type="journal article" date="2008" name="BMC Genomics">
        <title>Acidithiobacillus ferrooxidans metabolism: from genome sequence to industrial applications.</title>
        <authorList>
            <person name="Valdes J."/>
            <person name="Pedroso I."/>
            <person name="Quatrini R."/>
            <person name="Dodson R.J."/>
            <person name="Tettelin H."/>
            <person name="Blake R. II"/>
            <person name="Eisen J.A."/>
            <person name="Holmes D.S."/>
        </authorList>
    </citation>
    <scope>NUCLEOTIDE SEQUENCE [LARGE SCALE GENOMIC DNA]</scope>
    <source>
        <strain>ATCC 23270 / DSM 14882 / CIP 104768 / NCIMB 8455</strain>
    </source>
</reference>
<dbReference type="EC" id="6.1.1.19" evidence="1"/>
<dbReference type="EMBL" id="CP001219">
    <property type="protein sequence ID" value="ACK78518.1"/>
    <property type="molecule type" value="Genomic_DNA"/>
</dbReference>
<dbReference type="RefSeq" id="WP_012535997.1">
    <property type="nucleotide sequence ID" value="NC_011761.1"/>
</dbReference>
<dbReference type="SMR" id="B7J3R6"/>
<dbReference type="STRING" id="243159.AFE_0170"/>
<dbReference type="PaxDb" id="243159-AFE_0170"/>
<dbReference type="GeneID" id="65279555"/>
<dbReference type="KEGG" id="afr:AFE_0170"/>
<dbReference type="eggNOG" id="COG0018">
    <property type="taxonomic scope" value="Bacteria"/>
</dbReference>
<dbReference type="HOGENOM" id="CLU_006406_0_1_6"/>
<dbReference type="Proteomes" id="UP000001362">
    <property type="component" value="Chromosome"/>
</dbReference>
<dbReference type="GO" id="GO:0005737">
    <property type="term" value="C:cytoplasm"/>
    <property type="evidence" value="ECO:0007669"/>
    <property type="project" value="UniProtKB-SubCell"/>
</dbReference>
<dbReference type="GO" id="GO:0004814">
    <property type="term" value="F:arginine-tRNA ligase activity"/>
    <property type="evidence" value="ECO:0007669"/>
    <property type="project" value="UniProtKB-UniRule"/>
</dbReference>
<dbReference type="GO" id="GO:0005524">
    <property type="term" value="F:ATP binding"/>
    <property type="evidence" value="ECO:0007669"/>
    <property type="project" value="UniProtKB-UniRule"/>
</dbReference>
<dbReference type="GO" id="GO:0006420">
    <property type="term" value="P:arginyl-tRNA aminoacylation"/>
    <property type="evidence" value="ECO:0007669"/>
    <property type="project" value="UniProtKB-UniRule"/>
</dbReference>
<dbReference type="CDD" id="cd07956">
    <property type="entry name" value="Anticodon_Ia_Arg"/>
    <property type="match status" value="1"/>
</dbReference>
<dbReference type="CDD" id="cd00671">
    <property type="entry name" value="ArgRS_core"/>
    <property type="match status" value="1"/>
</dbReference>
<dbReference type="FunFam" id="1.10.730.10:FF:000008">
    <property type="entry name" value="Arginine--tRNA ligase"/>
    <property type="match status" value="1"/>
</dbReference>
<dbReference type="FunFam" id="3.40.50.620:FF:000062">
    <property type="entry name" value="Arginine--tRNA ligase"/>
    <property type="match status" value="1"/>
</dbReference>
<dbReference type="Gene3D" id="3.30.1360.70">
    <property type="entry name" value="Arginyl tRNA synthetase N-terminal domain"/>
    <property type="match status" value="1"/>
</dbReference>
<dbReference type="Gene3D" id="3.40.50.620">
    <property type="entry name" value="HUPs"/>
    <property type="match status" value="1"/>
</dbReference>
<dbReference type="Gene3D" id="1.10.730.10">
    <property type="entry name" value="Isoleucyl-tRNA Synthetase, Domain 1"/>
    <property type="match status" value="1"/>
</dbReference>
<dbReference type="HAMAP" id="MF_00123">
    <property type="entry name" value="Arg_tRNA_synth"/>
    <property type="match status" value="1"/>
</dbReference>
<dbReference type="InterPro" id="IPR001412">
    <property type="entry name" value="aa-tRNA-synth_I_CS"/>
</dbReference>
<dbReference type="InterPro" id="IPR001278">
    <property type="entry name" value="Arg-tRNA-ligase"/>
</dbReference>
<dbReference type="InterPro" id="IPR005148">
    <property type="entry name" value="Arg-tRNA-synth_N"/>
</dbReference>
<dbReference type="InterPro" id="IPR036695">
    <property type="entry name" value="Arg-tRNA-synth_N_sf"/>
</dbReference>
<dbReference type="InterPro" id="IPR035684">
    <property type="entry name" value="ArgRS_core"/>
</dbReference>
<dbReference type="InterPro" id="IPR008909">
    <property type="entry name" value="DALR_anticod-bd"/>
</dbReference>
<dbReference type="InterPro" id="IPR014729">
    <property type="entry name" value="Rossmann-like_a/b/a_fold"/>
</dbReference>
<dbReference type="InterPro" id="IPR009080">
    <property type="entry name" value="tRNAsynth_Ia_anticodon-bd"/>
</dbReference>
<dbReference type="NCBIfam" id="TIGR00456">
    <property type="entry name" value="argS"/>
    <property type="match status" value="1"/>
</dbReference>
<dbReference type="PANTHER" id="PTHR11956:SF5">
    <property type="entry name" value="ARGININE--TRNA LIGASE, CYTOPLASMIC"/>
    <property type="match status" value="1"/>
</dbReference>
<dbReference type="PANTHER" id="PTHR11956">
    <property type="entry name" value="ARGINYL-TRNA SYNTHETASE"/>
    <property type="match status" value="1"/>
</dbReference>
<dbReference type="Pfam" id="PF03485">
    <property type="entry name" value="Arg_tRNA_synt_N"/>
    <property type="match status" value="1"/>
</dbReference>
<dbReference type="Pfam" id="PF05746">
    <property type="entry name" value="DALR_1"/>
    <property type="match status" value="1"/>
</dbReference>
<dbReference type="Pfam" id="PF00750">
    <property type="entry name" value="tRNA-synt_1d"/>
    <property type="match status" value="2"/>
</dbReference>
<dbReference type="PRINTS" id="PR01038">
    <property type="entry name" value="TRNASYNTHARG"/>
</dbReference>
<dbReference type="SMART" id="SM01016">
    <property type="entry name" value="Arg_tRNA_synt_N"/>
    <property type="match status" value="1"/>
</dbReference>
<dbReference type="SMART" id="SM00836">
    <property type="entry name" value="DALR_1"/>
    <property type="match status" value="1"/>
</dbReference>
<dbReference type="SUPFAM" id="SSF47323">
    <property type="entry name" value="Anticodon-binding domain of a subclass of class I aminoacyl-tRNA synthetases"/>
    <property type="match status" value="1"/>
</dbReference>
<dbReference type="SUPFAM" id="SSF55190">
    <property type="entry name" value="Arginyl-tRNA synthetase (ArgRS), N-terminal 'additional' domain"/>
    <property type="match status" value="1"/>
</dbReference>
<dbReference type="SUPFAM" id="SSF52374">
    <property type="entry name" value="Nucleotidylyl transferase"/>
    <property type="match status" value="1"/>
</dbReference>
<dbReference type="PROSITE" id="PS00178">
    <property type="entry name" value="AA_TRNA_LIGASE_I"/>
    <property type="match status" value="1"/>
</dbReference>
<sequence>MKAFVSQALQGALQQLHAQGRIPGIPATLELDRPKQVEHGHLASNVALLLAKAVGRKPRDIADDIVAALPASDWIARTEIAGPGFINFFLQPAAFHAVIHRVRTEKEHFGANRNGAGQRLQMEFVSANPTGPLHVGHGRGAAYGASLANILRFNGFDIFCEYYVNDAGRQMDILAASVYLRYLEADKALPWPFPENGYRGDYVREIAAHLREQVGDRLRHAAVGLPNLPQMSDGDIAIDTLIAHLKQSLGEDYRTLHSAGLDEILADIRDDLEGFGVHYERWYSEGSLMDTGAVDSAVAALEKAGHCYTQEGALWFRATAFDDDKDRVLRRDNGAYTYFASDVAYHAEKFARGFTHVIDMWGADHHGYVPRVKAALRALGLDDQQLEVVLVQFAILYRGTEKISMSTRAGEFVTLRELREEVGNDAARFFYVLRRADQHLDFDLELAKKHSEENPVFYIQYAHARVYSLLRQSVEKGLSLPPADGVGLEILQESREIALADALWRFPEVVATAARDREPHQIAFYLRELAAAFHTYYNSTRILVEETPLRHARLTLCLAVAQSIANGLRLLGVSAPEQM</sequence>
<gene>
    <name evidence="1" type="primary">argS</name>
    <name type="ordered locus">AFE_0170</name>
</gene>
<comment type="catalytic activity">
    <reaction evidence="1">
        <text>tRNA(Arg) + L-arginine + ATP = L-arginyl-tRNA(Arg) + AMP + diphosphate</text>
        <dbReference type="Rhea" id="RHEA:20301"/>
        <dbReference type="Rhea" id="RHEA-COMP:9658"/>
        <dbReference type="Rhea" id="RHEA-COMP:9673"/>
        <dbReference type="ChEBI" id="CHEBI:30616"/>
        <dbReference type="ChEBI" id="CHEBI:32682"/>
        <dbReference type="ChEBI" id="CHEBI:33019"/>
        <dbReference type="ChEBI" id="CHEBI:78442"/>
        <dbReference type="ChEBI" id="CHEBI:78513"/>
        <dbReference type="ChEBI" id="CHEBI:456215"/>
        <dbReference type="EC" id="6.1.1.19"/>
    </reaction>
</comment>
<comment type="subunit">
    <text evidence="1">Monomer.</text>
</comment>
<comment type="subcellular location">
    <subcellularLocation>
        <location evidence="1">Cytoplasm</location>
    </subcellularLocation>
</comment>
<comment type="similarity">
    <text evidence="1">Belongs to the class-I aminoacyl-tRNA synthetase family.</text>
</comment>
<feature type="chain" id="PRO_1000198863" description="Arginine--tRNA ligase">
    <location>
        <begin position="1"/>
        <end position="579"/>
    </location>
</feature>
<feature type="short sequence motif" description="'HIGH' region">
    <location>
        <begin position="127"/>
        <end position="137"/>
    </location>
</feature>
<evidence type="ECO:0000255" key="1">
    <source>
        <dbReference type="HAMAP-Rule" id="MF_00123"/>
    </source>
</evidence>
<accession>B7J3R6</accession>
<organism>
    <name type="scientific">Acidithiobacillus ferrooxidans (strain ATCC 23270 / DSM 14882 / CIP 104768 / NCIMB 8455)</name>
    <name type="common">Ferrobacillus ferrooxidans (strain ATCC 23270)</name>
    <dbReference type="NCBI Taxonomy" id="243159"/>
    <lineage>
        <taxon>Bacteria</taxon>
        <taxon>Pseudomonadati</taxon>
        <taxon>Pseudomonadota</taxon>
        <taxon>Acidithiobacillia</taxon>
        <taxon>Acidithiobacillales</taxon>
        <taxon>Acidithiobacillaceae</taxon>
        <taxon>Acidithiobacillus</taxon>
    </lineage>
</organism>
<proteinExistence type="inferred from homology"/>
<protein>
    <recommendedName>
        <fullName evidence="1">Arginine--tRNA ligase</fullName>
        <ecNumber evidence="1">6.1.1.19</ecNumber>
    </recommendedName>
    <alternativeName>
        <fullName evidence="1">Arginyl-tRNA synthetase</fullName>
        <shortName evidence="1">ArgRS</shortName>
    </alternativeName>
</protein>